<reference key="1">
    <citation type="submission" date="2003-10" db="EMBL/GenBank/DDBJ databases">
        <title>Isolation and characterization of cDNA for macaque neurological disease genes.</title>
        <authorList>
            <person name="Kusuda J."/>
            <person name="Osada N."/>
            <person name="Tanuma R."/>
            <person name="Hirata M."/>
            <person name="Sugano S."/>
            <person name="Hashimoto K."/>
        </authorList>
    </citation>
    <scope>NUCLEOTIDE SEQUENCE [LARGE SCALE MRNA]</scope>
    <source>
        <tissue>Brain cortex</tissue>
    </source>
</reference>
<dbReference type="EMBL" id="AB125157">
    <property type="protein sequence ID" value="BAD51945.1"/>
    <property type="molecule type" value="mRNA"/>
</dbReference>
<dbReference type="STRING" id="9541.ENSMFAP00000042926"/>
<dbReference type="GlyCosmos" id="Q60HH0">
    <property type="glycosylation" value="3 sites, No reported glycans"/>
</dbReference>
<dbReference type="eggNOG" id="KOG3880">
    <property type="taxonomic scope" value="Eukaryota"/>
</dbReference>
<dbReference type="Proteomes" id="UP000233100">
    <property type="component" value="Unplaced"/>
</dbReference>
<dbReference type="GO" id="GO:0044754">
    <property type="term" value="C:autolysosome"/>
    <property type="evidence" value="ECO:0000250"/>
    <property type="project" value="UniProtKB"/>
</dbReference>
<dbReference type="GO" id="GO:0005901">
    <property type="term" value="C:caveola"/>
    <property type="evidence" value="ECO:0000250"/>
    <property type="project" value="UniProtKB"/>
</dbReference>
<dbReference type="GO" id="GO:0005737">
    <property type="term" value="C:cytoplasm"/>
    <property type="evidence" value="ECO:0000250"/>
    <property type="project" value="UniProtKB"/>
</dbReference>
<dbReference type="GO" id="GO:0005829">
    <property type="term" value="C:cytosol"/>
    <property type="evidence" value="ECO:0007669"/>
    <property type="project" value="GOC"/>
</dbReference>
<dbReference type="GO" id="GO:0005769">
    <property type="term" value="C:early endosome"/>
    <property type="evidence" value="ECO:0000250"/>
    <property type="project" value="UniProtKB"/>
</dbReference>
<dbReference type="GO" id="GO:0031901">
    <property type="term" value="C:early endosome membrane"/>
    <property type="evidence" value="ECO:0000250"/>
    <property type="project" value="UniProtKB"/>
</dbReference>
<dbReference type="GO" id="GO:0005783">
    <property type="term" value="C:endoplasmic reticulum"/>
    <property type="evidence" value="ECO:0000250"/>
    <property type="project" value="UniProtKB"/>
</dbReference>
<dbReference type="GO" id="GO:0005789">
    <property type="term" value="C:endoplasmic reticulum membrane"/>
    <property type="evidence" value="ECO:0000250"/>
    <property type="project" value="UniProtKB"/>
</dbReference>
<dbReference type="GO" id="GO:0005794">
    <property type="term" value="C:Golgi apparatus"/>
    <property type="evidence" value="ECO:0000250"/>
    <property type="project" value="UniProtKB"/>
</dbReference>
<dbReference type="GO" id="GO:0000139">
    <property type="term" value="C:Golgi membrane"/>
    <property type="evidence" value="ECO:0000250"/>
    <property type="project" value="UniProtKB"/>
</dbReference>
<dbReference type="GO" id="GO:0005795">
    <property type="term" value="C:Golgi stack"/>
    <property type="evidence" value="ECO:0000250"/>
    <property type="project" value="UniProtKB"/>
</dbReference>
<dbReference type="GO" id="GO:0005770">
    <property type="term" value="C:late endosome"/>
    <property type="evidence" value="ECO:0000250"/>
    <property type="project" value="UniProtKB"/>
</dbReference>
<dbReference type="GO" id="GO:0005765">
    <property type="term" value="C:lysosomal membrane"/>
    <property type="evidence" value="ECO:0000250"/>
    <property type="project" value="UniProtKB"/>
</dbReference>
<dbReference type="GO" id="GO:0005764">
    <property type="term" value="C:lysosome"/>
    <property type="evidence" value="ECO:0000250"/>
    <property type="project" value="UniProtKB"/>
</dbReference>
<dbReference type="GO" id="GO:0016020">
    <property type="term" value="C:membrane"/>
    <property type="evidence" value="ECO:0000250"/>
    <property type="project" value="UniProtKB"/>
</dbReference>
<dbReference type="GO" id="GO:0045121">
    <property type="term" value="C:membrane raft"/>
    <property type="evidence" value="ECO:0000250"/>
    <property type="project" value="UniProtKB"/>
</dbReference>
<dbReference type="GO" id="GO:0043005">
    <property type="term" value="C:neuron projection"/>
    <property type="evidence" value="ECO:0000250"/>
    <property type="project" value="UniProtKB"/>
</dbReference>
<dbReference type="GO" id="GO:0005634">
    <property type="term" value="C:nucleus"/>
    <property type="evidence" value="ECO:0000250"/>
    <property type="project" value="UniProtKB"/>
</dbReference>
<dbReference type="GO" id="GO:0005886">
    <property type="term" value="C:plasma membrane"/>
    <property type="evidence" value="ECO:0000250"/>
    <property type="project" value="UniProtKB"/>
</dbReference>
<dbReference type="GO" id="GO:0055037">
    <property type="term" value="C:recycling endosome"/>
    <property type="evidence" value="ECO:0000250"/>
    <property type="project" value="UniProtKB"/>
</dbReference>
<dbReference type="GO" id="GO:0008021">
    <property type="term" value="C:synaptic vesicle"/>
    <property type="evidence" value="ECO:0000250"/>
    <property type="project" value="UniProtKB"/>
</dbReference>
<dbReference type="GO" id="GO:0005802">
    <property type="term" value="C:trans-Golgi network"/>
    <property type="evidence" value="ECO:0000250"/>
    <property type="project" value="UniProtKB"/>
</dbReference>
<dbReference type="GO" id="GO:0051861">
    <property type="term" value="F:glycolipid binding"/>
    <property type="evidence" value="ECO:0000250"/>
    <property type="project" value="UniProtKB"/>
</dbReference>
<dbReference type="GO" id="GO:0120146">
    <property type="term" value="F:sulfatide binding"/>
    <property type="evidence" value="ECO:0000250"/>
    <property type="project" value="UniProtKB"/>
</dbReference>
<dbReference type="GO" id="GO:0042987">
    <property type="term" value="P:amyloid precursor protein catabolic process"/>
    <property type="evidence" value="ECO:0000250"/>
    <property type="project" value="UniProtKB"/>
</dbReference>
<dbReference type="GO" id="GO:0061909">
    <property type="term" value="P:autophagosome-lysosome fusion"/>
    <property type="evidence" value="ECO:0000250"/>
    <property type="project" value="UniProtKB"/>
</dbReference>
<dbReference type="GO" id="GO:0046474">
    <property type="term" value="P:glycerophospholipid biosynthetic process"/>
    <property type="evidence" value="ECO:0000250"/>
    <property type="project" value="UniProtKB"/>
</dbReference>
<dbReference type="GO" id="GO:0046836">
    <property type="term" value="P:glycolipid transport"/>
    <property type="evidence" value="ECO:0000250"/>
    <property type="project" value="UniProtKB"/>
</dbReference>
<dbReference type="GO" id="GO:0090160">
    <property type="term" value="P:Golgi to lysosome transport"/>
    <property type="evidence" value="ECO:0000250"/>
    <property type="project" value="UniProtKB"/>
</dbReference>
<dbReference type="GO" id="GO:0009992">
    <property type="term" value="P:intracellular water homeostasis"/>
    <property type="evidence" value="ECO:0000250"/>
    <property type="project" value="UniProtKB"/>
</dbReference>
<dbReference type="GO" id="GO:1903826">
    <property type="term" value="P:L-arginine transmembrane transport"/>
    <property type="evidence" value="ECO:0000250"/>
    <property type="project" value="UniProtKB"/>
</dbReference>
<dbReference type="GO" id="GO:0007611">
    <property type="term" value="P:learning or memory"/>
    <property type="evidence" value="ECO:0000250"/>
    <property type="project" value="UniProtKB"/>
</dbReference>
<dbReference type="GO" id="GO:0007042">
    <property type="term" value="P:lysosomal lumen acidification"/>
    <property type="evidence" value="ECO:0000250"/>
    <property type="project" value="UniProtKB"/>
</dbReference>
<dbReference type="GO" id="GO:0035752">
    <property type="term" value="P:lysosomal lumen pH elevation"/>
    <property type="evidence" value="ECO:0000250"/>
    <property type="project" value="UniProtKB"/>
</dbReference>
<dbReference type="GO" id="GO:1905146">
    <property type="term" value="P:lysosomal protein catabolic process"/>
    <property type="evidence" value="ECO:0000250"/>
    <property type="project" value="UniProtKB"/>
</dbReference>
<dbReference type="GO" id="GO:0043066">
    <property type="term" value="P:negative regulation of apoptotic process"/>
    <property type="evidence" value="ECO:0000250"/>
    <property type="project" value="UniProtKB"/>
</dbReference>
<dbReference type="GO" id="GO:0090384">
    <property type="term" value="P:phagosome-lysosome docking"/>
    <property type="evidence" value="ECO:0000250"/>
    <property type="project" value="UniProtKB"/>
</dbReference>
<dbReference type="GO" id="GO:0090385">
    <property type="term" value="P:phagosome-lysosome fusion"/>
    <property type="evidence" value="ECO:0000250"/>
    <property type="project" value="UniProtKB"/>
</dbReference>
<dbReference type="GO" id="GO:0044857">
    <property type="term" value="P:plasma membrane raft organization"/>
    <property type="evidence" value="ECO:0000250"/>
    <property type="project" value="UniProtKB"/>
</dbReference>
<dbReference type="GO" id="GO:2001288">
    <property type="term" value="P:positive regulation of caveolin-mediated endocytosis"/>
    <property type="evidence" value="ECO:0000250"/>
    <property type="project" value="UniProtKB"/>
</dbReference>
<dbReference type="GO" id="GO:0042998">
    <property type="term" value="P:positive regulation of Golgi to plasma membrane protein transport"/>
    <property type="evidence" value="ECO:0000250"/>
    <property type="project" value="UniProtKB"/>
</dbReference>
<dbReference type="GO" id="GO:0048549">
    <property type="term" value="P:positive regulation of pinocytosis"/>
    <property type="evidence" value="ECO:0000250"/>
    <property type="project" value="UniProtKB"/>
</dbReference>
<dbReference type="GO" id="GO:0006898">
    <property type="term" value="P:receptor-mediated endocytosis"/>
    <property type="evidence" value="ECO:0000250"/>
    <property type="project" value="UniProtKB"/>
</dbReference>
<dbReference type="GO" id="GO:1900079">
    <property type="term" value="P:regulation of arginine biosynthetic process"/>
    <property type="evidence" value="ECO:0000250"/>
    <property type="project" value="UniProtKB"/>
</dbReference>
<dbReference type="GO" id="GO:1901096">
    <property type="term" value="P:regulation of autophagosome maturation"/>
    <property type="evidence" value="ECO:0000250"/>
    <property type="project" value="UniProtKB"/>
</dbReference>
<dbReference type="GO" id="GO:0106049">
    <property type="term" value="P:regulation of cellular response to osmotic stress"/>
    <property type="evidence" value="ECO:0000250"/>
    <property type="project" value="UniProtKB"/>
</dbReference>
<dbReference type="GO" id="GO:0051493">
    <property type="term" value="P:regulation of cytoskeleton organization"/>
    <property type="evidence" value="ECO:0000250"/>
    <property type="project" value="UniProtKB"/>
</dbReference>
<dbReference type="GO" id="GO:0010762">
    <property type="term" value="P:regulation of fibroblast migration"/>
    <property type="evidence" value="ECO:0000250"/>
    <property type="project" value="UniProtKB"/>
</dbReference>
<dbReference type="GO" id="GO:1905244">
    <property type="term" value="P:regulation of modification of synaptic structure"/>
    <property type="evidence" value="ECO:0000250"/>
    <property type="project" value="UniProtKB"/>
</dbReference>
<dbReference type="GO" id="GO:1905162">
    <property type="term" value="P:regulation of phagosome maturation"/>
    <property type="evidence" value="ECO:0000250"/>
    <property type="project" value="UniProtKB"/>
</dbReference>
<dbReference type="GO" id="GO:1903076">
    <property type="term" value="P:regulation of protein localization to plasma membrane"/>
    <property type="evidence" value="ECO:0000250"/>
    <property type="project" value="UniProtKB"/>
</dbReference>
<dbReference type="GO" id="GO:0070613">
    <property type="term" value="P:regulation of protein processing"/>
    <property type="evidence" value="ECO:0000250"/>
    <property type="project" value="UniProtKB"/>
</dbReference>
<dbReference type="GO" id="GO:0048172">
    <property type="term" value="P:regulation of short-term neuronal synaptic plasticity"/>
    <property type="evidence" value="ECO:0000250"/>
    <property type="project" value="UniProtKB"/>
</dbReference>
<dbReference type="GO" id="GO:0032228">
    <property type="term" value="P:regulation of synaptic transmission, GABAergic"/>
    <property type="evidence" value="ECO:0000250"/>
    <property type="project" value="UniProtKB"/>
</dbReference>
<dbReference type="GO" id="GO:0051966">
    <property type="term" value="P:regulation of synaptic transmission, glutamatergic"/>
    <property type="evidence" value="ECO:0000250"/>
    <property type="project" value="UniProtKB"/>
</dbReference>
<dbReference type="GO" id="GO:0036359">
    <property type="term" value="P:renal potassium excretion"/>
    <property type="evidence" value="ECO:0000250"/>
    <property type="project" value="UniProtKB"/>
</dbReference>
<dbReference type="GO" id="GO:0047496">
    <property type="term" value="P:vesicle transport along microtubule"/>
    <property type="evidence" value="ECO:0000250"/>
    <property type="project" value="UniProtKB"/>
</dbReference>
<dbReference type="FunFam" id="1.20.1250.20:FF:000228">
    <property type="entry name" value="Battenin"/>
    <property type="match status" value="1"/>
</dbReference>
<dbReference type="Gene3D" id="1.20.1250.20">
    <property type="entry name" value="MFS general substrate transporter like domains"/>
    <property type="match status" value="1"/>
</dbReference>
<dbReference type="InterPro" id="IPR003492">
    <property type="entry name" value="Battenin_disease_Cln3"/>
</dbReference>
<dbReference type="InterPro" id="IPR018460">
    <property type="entry name" value="Battenin_disease_Cln3_subgr"/>
</dbReference>
<dbReference type="InterPro" id="IPR036259">
    <property type="entry name" value="MFS_trans_sf"/>
</dbReference>
<dbReference type="PANTHER" id="PTHR10981">
    <property type="entry name" value="BATTENIN"/>
    <property type="match status" value="1"/>
</dbReference>
<dbReference type="PANTHER" id="PTHR10981:SF0">
    <property type="entry name" value="BATTENIN"/>
    <property type="match status" value="1"/>
</dbReference>
<dbReference type="Pfam" id="PF02487">
    <property type="entry name" value="CLN3"/>
    <property type="match status" value="1"/>
</dbReference>
<dbReference type="PIRSF" id="PIRSF015974">
    <property type="entry name" value="CLN3_BTN1"/>
    <property type="match status" value="1"/>
</dbReference>
<dbReference type="PRINTS" id="PR01315">
    <property type="entry name" value="BATTENIN"/>
</dbReference>
<dbReference type="SUPFAM" id="SSF103473">
    <property type="entry name" value="MFS general substrate transporter"/>
    <property type="match status" value="1"/>
</dbReference>
<organism>
    <name type="scientific">Macaca fascicularis</name>
    <name type="common">Crab-eating macaque</name>
    <name type="synonym">Cynomolgus monkey</name>
    <dbReference type="NCBI Taxonomy" id="9541"/>
    <lineage>
        <taxon>Eukaryota</taxon>
        <taxon>Metazoa</taxon>
        <taxon>Chordata</taxon>
        <taxon>Craniata</taxon>
        <taxon>Vertebrata</taxon>
        <taxon>Euteleostomi</taxon>
        <taxon>Mammalia</taxon>
        <taxon>Eutheria</taxon>
        <taxon>Euarchontoglires</taxon>
        <taxon>Primates</taxon>
        <taxon>Haplorrhini</taxon>
        <taxon>Catarrhini</taxon>
        <taxon>Cercopithecidae</taxon>
        <taxon>Cercopithecinae</taxon>
        <taxon>Macaca</taxon>
    </lineage>
</organism>
<keyword id="KW-0967">Endosome</keyword>
<keyword id="KW-0325">Glycoprotein</keyword>
<keyword id="KW-0449">Lipoprotein</keyword>
<keyword id="KW-0458">Lysosome</keyword>
<keyword id="KW-0472">Membrane</keyword>
<keyword id="KW-0488">Methylation</keyword>
<keyword id="KW-0597">Phosphoprotein</keyword>
<keyword id="KW-0636">Prenylation</keyword>
<keyword id="KW-1185">Reference proteome</keyword>
<keyword id="KW-0812">Transmembrane</keyword>
<keyword id="KW-1133">Transmembrane helix</keyword>
<keyword id="KW-0813">Transport</keyword>
<accession>Q60HH0</accession>
<comment type="function">
    <text evidence="1 2">Mediates microtubule-dependent, anterograde transport connecting the Golgi network, endosomes, autophagosomes, lysosomes and plasma membrane, and participates in several cellular processes such as regulation of lysosomal pH, lysosome protein degradation, receptor-mediated endocytosis, autophagy, transport of proteins and lipids from the TGN, apoptosis and synaptic transmission. Facilitates the proteins transport from trans-Golgi network (TGN)-to other membrane compartments such as transport of microdomain-associated proteins to the plasma membrane, IGF2R transport to the lysosome where it regulates the CTSD release leading to regulation of CTSD maturation and thereby APP intracellular processing (By similarity). Moreover regulates CTSD activity in response to osmotic stress (By similarity). Also binds galactosylceramide and transports it from the trans Golgi to the rafts, which may have immediate and downstream effects on cell survival by modulating ceramide synthesis. At the plasma membrane, regulates actin-dependent events including filopodia formation, cell migration, and pinocytosis through ARF1-CDC42 pathway and also the cytoskeleton organization through interaction with MYH10 and fodrin leading to the regulation of the plasma membrane association of Na+, K+ ATPase complex. Regulates synaptic transmission in the amygdala, hippocampus, and cerebellum through regulation of synaptic vesicles density and their proximity to active zones leading to modulation of short-term plasticity and age-dependent anxious behavior, learning and memory. Regulates autophagic vacuoles (AVs) maturation by modulating the trafficking between endocytic and autophagolysosomal/lysosomal compartments, which involves vesicle fusion leading to regulation of degradation process. Also participates in cellular homeostasis of compounds such as, water, ions, amino acids, proteins and lipids in several tissue namely in brain and kidney through regulation of their transport and synthesis (By similarity).</text>
</comment>
<comment type="subunit">
    <text evidence="1">Interacts with DCTN1, KIF3A, RAB7A and RILP. Interacts with CLN5.</text>
</comment>
<comment type="subcellular location">
    <subcellularLocation>
        <location evidence="1">Lysosome membrane</location>
        <topology evidence="3">Multi-pass membrane protein</topology>
    </subcellularLocation>
    <subcellularLocation>
        <location evidence="1">Late endosome</location>
    </subcellularLocation>
    <subcellularLocation>
        <location evidence="1">Lysosome</location>
    </subcellularLocation>
</comment>
<comment type="PTM">
    <text evidence="1">Highly glycosylated.</text>
</comment>
<comment type="PTM">
    <text evidence="1">Farnesylation is important for trafficking to lysosomes.</text>
</comment>
<comment type="similarity">
    <text evidence="5">Belongs to the battenin family.</text>
</comment>
<sequence>MGGCAGSRRRLSDSEGEETVPEPRLPLLDHQGAHWKNAVGFWLLGLCNNFSYVVMLSAAHDILSHERTSGNQSHVDPGPAPIPHNSSSRFDCNSVSTAAVLLADILPTLVIKLLAPLGLHLLPYSPRVLVSGICAAGSFVLVAFSHSVGTSLCGVVLASISSGLGEVTFLSLTAFYPRAVISWWSSGTGGAGLLGALSYLGLTQAGLSPQQTLLSMLGIPALLLASYFLLLTSPEAQDPGGEEEAESSARQPLIRTEAPESKPGSSSSLSLRERWTVFKGLLWYIVPLVVVYFAEYFINQGLFELLFFRNTSLSHAQQYRWYQMLYQAGVFASRSSLRCCHIRFTWALALLQCLNLAFLLADVWFGFLLSIYFVFLIILYEGLLGGAAYVNTFHNIALETSDEHREFAMATTCISDTLGISLSGLLALPLHDFLCQLS</sequence>
<proteinExistence type="evidence at transcript level"/>
<evidence type="ECO:0000250" key="1">
    <source>
        <dbReference type="UniProtKB" id="Q13286"/>
    </source>
</evidence>
<evidence type="ECO:0000250" key="2">
    <source>
        <dbReference type="UniProtKB" id="Q61124"/>
    </source>
</evidence>
<evidence type="ECO:0000255" key="3"/>
<evidence type="ECO:0000256" key="4">
    <source>
        <dbReference type="SAM" id="MobiDB-lite"/>
    </source>
</evidence>
<evidence type="ECO:0000305" key="5"/>
<feature type="chain" id="PRO_0000089858" description="Battenin">
    <location>
        <begin position="1"/>
        <end position="435"/>
    </location>
</feature>
<feature type="propeptide" id="PRO_0000422291" description="Removed in mature form" evidence="1">
    <location>
        <begin position="436"/>
        <end position="438"/>
    </location>
</feature>
<feature type="topological domain" description="Cytoplasmic" evidence="1 3">
    <location>
        <begin position="1"/>
        <end position="37"/>
    </location>
</feature>
<feature type="transmembrane region" description="Helical" evidence="3">
    <location>
        <begin position="38"/>
        <end position="58"/>
    </location>
</feature>
<feature type="topological domain" description="Lumenal" evidence="3">
    <location>
        <begin position="59"/>
        <end position="127"/>
    </location>
</feature>
<feature type="transmembrane region" description="Helical" evidence="3">
    <location>
        <begin position="128"/>
        <end position="148"/>
    </location>
</feature>
<feature type="topological domain" description="Cytoplasmic" evidence="3">
    <location>
        <begin position="149"/>
        <end position="151"/>
    </location>
</feature>
<feature type="transmembrane region" description="Helical" evidence="3">
    <location>
        <begin position="152"/>
        <end position="172"/>
    </location>
</feature>
<feature type="topological domain" description="Lumenal" evidence="3">
    <location>
        <begin position="173"/>
        <end position="182"/>
    </location>
</feature>
<feature type="transmembrane region" description="Helical" evidence="3">
    <location>
        <begin position="183"/>
        <end position="203"/>
    </location>
</feature>
<feature type="topological domain" description="Cytoplasmic" evidence="1 3">
    <location>
        <begin position="204"/>
        <end position="277"/>
    </location>
</feature>
<feature type="transmembrane region" description="Helical" evidence="3">
    <location>
        <begin position="278"/>
        <end position="298"/>
    </location>
</feature>
<feature type="topological domain" description="Lumenal" evidence="1 3">
    <location>
        <begin position="299"/>
        <end position="346"/>
    </location>
</feature>
<feature type="transmembrane region" description="Helical" evidence="3">
    <location>
        <begin position="347"/>
        <end position="367"/>
    </location>
</feature>
<feature type="topological domain" description="Cytoplasmic" evidence="1 3">
    <location>
        <begin position="368"/>
        <end position="438"/>
    </location>
</feature>
<feature type="region of interest" description="Disordered" evidence="4">
    <location>
        <begin position="1"/>
        <end position="25"/>
    </location>
</feature>
<feature type="region of interest" description="Disordered" evidence="4">
    <location>
        <begin position="237"/>
        <end position="268"/>
    </location>
</feature>
<feature type="short sequence motif" description="Lysosomal targeting motif" evidence="1">
    <location>
        <begin position="242"/>
        <end position="244"/>
    </location>
</feature>
<feature type="short sequence motif" description="Lysosomal targeting motif. Required for AP1G1, AP2A2 and AP3D1 interaction" evidence="1">
    <location>
        <begin position="253"/>
        <end position="254"/>
    </location>
</feature>
<feature type="short sequence motif" description="Lysosomal targeting motif" evidence="1">
    <location>
        <begin position="409"/>
        <end position="419"/>
    </location>
</feature>
<feature type="modified residue" description="Phosphoserine" evidence="1">
    <location>
        <position position="12"/>
    </location>
</feature>
<feature type="modified residue" description="Phosphoserine" evidence="1">
    <location>
        <position position="14"/>
    </location>
</feature>
<feature type="modified residue" description="Cysteine methyl ester" evidence="1">
    <location>
        <position position="435"/>
    </location>
</feature>
<feature type="lipid moiety-binding region" description="S-farnesyl cysteine" evidence="1">
    <location>
        <position position="435"/>
    </location>
</feature>
<feature type="glycosylation site" description="N-linked (GlcNAc...) asparagine" evidence="3">
    <location>
        <position position="71"/>
    </location>
</feature>
<feature type="glycosylation site" description="N-linked (GlcNAc...) asparagine" evidence="3">
    <location>
        <position position="85"/>
    </location>
</feature>
<feature type="glycosylation site" description="N-linked (GlcNAc...) asparagine" evidence="3">
    <location>
        <position position="310"/>
    </location>
</feature>
<gene>
    <name evidence="1" type="primary">CLN3</name>
    <name type="ORF">QccE-16380</name>
</gene>
<protein>
    <recommendedName>
        <fullName evidence="1">Battenin</fullName>
    </recommendedName>
    <alternativeName>
        <fullName>Protein CLN3</fullName>
    </alternativeName>
</protein>
<name>CLN3_MACFA</name>